<sequence>FREIKGYEYQLYVYASDKLFRADISEDYKTRGRKLLRFNGPVPPP</sequence>
<evidence type="ECO:0000305" key="1"/>
<evidence type="ECO:0007829" key="2">
    <source>
        <dbReference type="PDB" id="8JZ0"/>
    </source>
</evidence>
<accession>P02881</accession>
<feature type="chain" id="PRO_0000207165" description="Monellin chain A">
    <location>
        <begin position="1"/>
        <end position="45"/>
    </location>
</feature>
<feature type="sequence variant" description="In 90% of the chains.">
    <location>
        <position position="1"/>
    </location>
</feature>
<feature type="sequence conflict" description="In Ref. 3; AA sequence." evidence="1" ref="3">
    <original>D</original>
    <variation>N</variation>
    <location>
        <position position="23"/>
    </location>
</feature>
<feature type="sequence conflict" description="In Ref. 3; AA sequence." evidence="1" ref="3">
    <original>ED</original>
    <variation>QN</variation>
    <location>
        <begin position="26"/>
        <end position="27"/>
    </location>
</feature>
<feature type="strand" evidence="2">
    <location>
        <begin position="6"/>
        <end position="15"/>
    </location>
</feature>
<feature type="strand" evidence="2">
    <location>
        <begin position="18"/>
        <end position="27"/>
    </location>
</feature>
<feature type="turn" evidence="2">
    <location>
        <begin position="28"/>
        <end position="30"/>
    </location>
</feature>
<feature type="strand" evidence="2">
    <location>
        <begin position="33"/>
        <end position="39"/>
    </location>
</feature>
<proteinExistence type="evidence at protein level"/>
<dbReference type="PIR" id="JH0209">
    <property type="entry name" value="MLDIA"/>
</dbReference>
<dbReference type="PDB" id="1FA3">
    <property type="method" value="NMR"/>
    <property type="chains" value="A=1-45"/>
</dbReference>
<dbReference type="PDB" id="1FUW">
    <property type="method" value="NMR"/>
    <property type="chains" value="A=2-42"/>
</dbReference>
<dbReference type="PDB" id="1IV7">
    <property type="method" value="X-ray"/>
    <property type="resolution" value="1.82 A"/>
    <property type="chains" value="A/B=1-45"/>
</dbReference>
<dbReference type="PDB" id="1IV9">
    <property type="method" value="X-ray"/>
    <property type="resolution" value="1.90 A"/>
    <property type="chains" value="A/B=1-45"/>
</dbReference>
<dbReference type="PDB" id="1KRL">
    <property type="method" value="X-ray"/>
    <property type="resolution" value="1.90 A"/>
    <property type="chains" value="A/C=2-45"/>
</dbReference>
<dbReference type="PDB" id="1M9G">
    <property type="method" value="NMR"/>
    <property type="chains" value="A=1-45"/>
</dbReference>
<dbReference type="PDB" id="1MNL">
    <property type="method" value="NMR"/>
    <property type="chains" value="A=1-45"/>
</dbReference>
<dbReference type="PDB" id="3MON">
    <property type="method" value="X-ray"/>
    <property type="resolution" value="2.80 A"/>
    <property type="chains" value="A/C/E/G=2-45"/>
</dbReference>
<dbReference type="PDB" id="3PXM">
    <property type="method" value="X-ray"/>
    <property type="resolution" value="1.80 A"/>
    <property type="chains" value="A/B=2-45"/>
</dbReference>
<dbReference type="PDB" id="3PYJ">
    <property type="method" value="X-ray"/>
    <property type="resolution" value="2.00 A"/>
    <property type="chains" value="A=2-45"/>
</dbReference>
<dbReference type="PDB" id="3Q2P">
    <property type="method" value="X-ray"/>
    <property type="resolution" value="2.34 A"/>
    <property type="chains" value="A/B/C/D=2-45"/>
</dbReference>
<dbReference type="PDB" id="4MON">
    <property type="method" value="X-ray"/>
    <property type="resolution" value="2.30 A"/>
    <property type="chains" value="A/C=1-45"/>
</dbReference>
<dbReference type="PDB" id="5LC6">
    <property type="method" value="X-ray"/>
    <property type="resolution" value="1.70 A"/>
    <property type="chains" value="A/B=1-45"/>
</dbReference>
<dbReference type="PDB" id="5LC7">
    <property type="method" value="X-ray"/>
    <property type="resolution" value="1.55 A"/>
    <property type="chains" value="A/B=1-45"/>
</dbReference>
<dbReference type="PDB" id="5O7K">
    <property type="method" value="X-ray"/>
    <property type="resolution" value="2.05 A"/>
    <property type="chains" value="A/B=1-45"/>
</dbReference>
<dbReference type="PDB" id="5O7Q">
    <property type="method" value="X-ray"/>
    <property type="resolution" value="1.72 A"/>
    <property type="chains" value="A/B=1-45"/>
</dbReference>
<dbReference type="PDB" id="5O7R">
    <property type="method" value="X-ray"/>
    <property type="resolution" value="2.06 A"/>
    <property type="chains" value="A/B=1-45"/>
</dbReference>
<dbReference type="PDB" id="5O7S">
    <property type="method" value="X-ray"/>
    <property type="resolution" value="2.02 A"/>
    <property type="chains" value="A/B=1-45"/>
</dbReference>
<dbReference type="PDB" id="5XFU">
    <property type="method" value="X-ray"/>
    <property type="resolution" value="2.61 A"/>
    <property type="chains" value="A/B/C/D/E=4-45"/>
</dbReference>
<dbReference type="PDB" id="5YCT">
    <property type="method" value="X-ray"/>
    <property type="resolution" value="1.85 A"/>
    <property type="chains" value="A/B=1-45"/>
</dbReference>
<dbReference type="PDB" id="5YCU">
    <property type="method" value="X-ray"/>
    <property type="resolution" value="2.32 A"/>
    <property type="chains" value="A/B/C/D/E=4-45"/>
</dbReference>
<dbReference type="PDB" id="5YCW">
    <property type="method" value="X-ray"/>
    <property type="resolution" value="2.29 A"/>
    <property type="chains" value="A=4-45"/>
</dbReference>
<dbReference type="PDB" id="5Z1P">
    <property type="method" value="X-ray"/>
    <property type="resolution" value="1.89 A"/>
    <property type="chains" value="A/B/C/D=1-45"/>
</dbReference>
<dbReference type="PDB" id="6L44">
    <property type="method" value="X-ray"/>
    <property type="resolution" value="2.49 A"/>
    <property type="chains" value="A/B=6-45"/>
</dbReference>
<dbReference type="PDB" id="6L4I">
    <property type="method" value="X-ray"/>
    <property type="resolution" value="2.20 A"/>
    <property type="chains" value="A/B=4-45"/>
</dbReference>
<dbReference type="PDB" id="6L4J">
    <property type="method" value="X-ray"/>
    <property type="resolution" value="2.30 A"/>
    <property type="chains" value="A/B=4-45"/>
</dbReference>
<dbReference type="PDB" id="6L4N">
    <property type="method" value="X-ray"/>
    <property type="resolution" value="2.43 A"/>
    <property type="chains" value="A/B=6-45"/>
</dbReference>
<dbReference type="PDB" id="6LAY">
    <property type="method" value="X-ray"/>
    <property type="resolution" value="3.00 A"/>
    <property type="chains" value="A/B=6-45"/>
</dbReference>
<dbReference type="PDB" id="7D75">
    <property type="method" value="X-ray"/>
    <property type="resolution" value="2.50 A"/>
    <property type="chains" value="A/B/C/D=5-45"/>
</dbReference>
<dbReference type="PDB" id="7EUA">
    <property type="method" value="X-ray"/>
    <property type="resolution" value="2.43 A"/>
    <property type="chains" value="A=1-45"/>
</dbReference>
<dbReference type="PDB" id="7VWW">
    <property type="method" value="X-ray"/>
    <property type="resolution" value="2.70 A"/>
    <property type="chains" value="A/B/C/D/E/F/G/H=4-45"/>
</dbReference>
<dbReference type="PDB" id="8JZ0">
    <property type="method" value="X-ray"/>
    <property type="resolution" value="1.23 A"/>
    <property type="chains" value="A/B=2-45"/>
</dbReference>
<dbReference type="PDB" id="8JZ1">
    <property type="method" value="X-ray"/>
    <property type="resolution" value="1.24 A"/>
    <property type="chains" value="A/B=2-45"/>
</dbReference>
<dbReference type="PDB" id="8Q0R">
    <property type="method" value="X-ray"/>
    <property type="resolution" value="1.55 A"/>
    <property type="chains" value="AAA/BBB=1-45"/>
</dbReference>
<dbReference type="PDB" id="8Q0S">
    <property type="method" value="X-ray"/>
    <property type="resolution" value="1.19 A"/>
    <property type="chains" value="AAA/BBB=1-45"/>
</dbReference>
<dbReference type="PDB" id="8TM8">
    <property type="method" value="X-ray"/>
    <property type="resolution" value="2.26 A"/>
    <property type="chains" value="A/B=4-45"/>
</dbReference>
<dbReference type="PDBsum" id="1FA3"/>
<dbReference type="PDBsum" id="1FUW"/>
<dbReference type="PDBsum" id="1IV7"/>
<dbReference type="PDBsum" id="1IV9"/>
<dbReference type="PDBsum" id="1KRL"/>
<dbReference type="PDBsum" id="1M9G"/>
<dbReference type="PDBsum" id="1MNL"/>
<dbReference type="PDBsum" id="3MON"/>
<dbReference type="PDBsum" id="3PXM"/>
<dbReference type="PDBsum" id="3PYJ"/>
<dbReference type="PDBsum" id="3Q2P"/>
<dbReference type="PDBsum" id="4MON"/>
<dbReference type="PDBsum" id="5LC6"/>
<dbReference type="PDBsum" id="5LC7"/>
<dbReference type="PDBsum" id="5O7K"/>
<dbReference type="PDBsum" id="5O7Q"/>
<dbReference type="PDBsum" id="5O7R"/>
<dbReference type="PDBsum" id="5O7S"/>
<dbReference type="PDBsum" id="5XFU"/>
<dbReference type="PDBsum" id="5YCT"/>
<dbReference type="PDBsum" id="5YCU"/>
<dbReference type="PDBsum" id="5YCW"/>
<dbReference type="PDBsum" id="5Z1P"/>
<dbReference type="PDBsum" id="6L44"/>
<dbReference type="PDBsum" id="6L4I"/>
<dbReference type="PDBsum" id="6L4J"/>
<dbReference type="PDBsum" id="6L4N"/>
<dbReference type="PDBsum" id="6LAY"/>
<dbReference type="PDBsum" id="7D75"/>
<dbReference type="PDBsum" id="7EUA"/>
<dbReference type="PDBsum" id="7VWW"/>
<dbReference type="PDBsum" id="8JZ0"/>
<dbReference type="PDBsum" id="8JZ1"/>
<dbReference type="PDBsum" id="8Q0R"/>
<dbReference type="PDBsum" id="8Q0S"/>
<dbReference type="PDBsum" id="8TM8"/>
<dbReference type="SMR" id="P02881"/>
<dbReference type="IntAct" id="P02881">
    <property type="interactions" value="1"/>
</dbReference>
<dbReference type="MINT" id="P02881"/>
<dbReference type="EvolutionaryTrace" id="P02881"/>
<dbReference type="Gene3D" id="6.20.50.130">
    <property type="match status" value="1"/>
</dbReference>
<dbReference type="InterPro" id="IPR046350">
    <property type="entry name" value="Cystatin_sf"/>
</dbReference>
<dbReference type="InterPro" id="IPR015283">
    <property type="entry name" value="Monellin"/>
</dbReference>
<dbReference type="InterPro" id="IPR000828">
    <property type="entry name" value="Monellin_A"/>
</dbReference>
<dbReference type="InterPro" id="IPR038580">
    <property type="entry name" value="Monellin_A_sf"/>
</dbReference>
<dbReference type="Pfam" id="PF09200">
    <property type="entry name" value="Monellin"/>
    <property type="match status" value="1"/>
</dbReference>
<dbReference type="PRINTS" id="PR00630">
    <property type="entry name" value="MONELLINA"/>
</dbReference>
<dbReference type="SUPFAM" id="SSF54403">
    <property type="entry name" value="Cystatin/monellin"/>
    <property type="match status" value="1"/>
</dbReference>
<name>MONA_DIOCU</name>
<reference key="1">
    <citation type="journal article" date="1990" name="Agric. Biol. Chem.">
        <title>Complete amino acid sequence of the sweet protein monellin.</title>
        <authorList>
            <person name="Kohmura M."/>
            <person name="Nio N."/>
            <person name="Ariyoshi Y."/>
        </authorList>
    </citation>
    <scope>PROTEIN SEQUENCE</scope>
</reference>
<reference key="2">
    <citation type="journal article" date="1976" name="Hoppe-Seyler's Z. Physiol. Chem.">
        <title>The complete amino acid sequences of both subunits of the sweet protein monellin.</title>
        <authorList>
            <person name="Frank G."/>
            <person name="Zuber H."/>
        </authorList>
    </citation>
    <scope>PROTEIN SEQUENCE</scope>
</reference>
<reference key="3">
    <citation type="journal article" date="1976" name="Biochem. Biophys. Res. Commun.">
        <title>Mass spectrometric sequencing of proteins. The structure of subunit I of monellin.</title>
        <authorList>
            <person name="Hudson G."/>
            <person name="Biemann K."/>
        </authorList>
    </citation>
    <scope>PROTEIN SEQUENCE</scope>
</reference>
<reference key="4">
    <citation type="journal article" date="1976" name="Biochim. Biophys. Acta">
        <title>The structure of monellin and its relation to the sweetness of the protein.</title>
        <authorList>
            <person name="Bohak Z."/>
            <person name="Li S.-L."/>
        </authorList>
    </citation>
    <scope>PROTEIN SEQUENCE OF 2-28</scope>
</reference>
<reference key="5">
    <citation type="journal article" date="1987" name="Nature">
        <title>Crystal structure of the intensely sweet protein monellin.</title>
        <authorList>
            <person name="Ogata C."/>
            <person name="Hatada M."/>
            <person name="Tomlinson G."/>
            <person name="Shin W.-C."/>
            <person name="Kim S.-H."/>
        </authorList>
    </citation>
    <scope>X-RAY CRYSTALLOGRAPHY (3.0 ANGSTROMS)</scope>
</reference>
<reference key="6">
    <citation type="journal article" date="1997" name="Acta Crystallogr. D">
        <title>Structure of monellin refined to 2.3-A resolution in the orthorhombic crystal form.</title>
        <authorList>
            <person name="Bujacz G."/>
            <person name="Miller M."/>
            <person name="Harrison R."/>
            <person name="Thanki N."/>
            <person name="Gilliland G.L."/>
            <person name="Ogata C."/>
            <person name="Kim S.-H."/>
            <person name="Wlodawer A."/>
        </authorList>
    </citation>
    <scope>X-RAY CRYSTALLOGRAPHY (2.3 ANGSTROMS)</scope>
</reference>
<reference key="7">
    <citation type="journal article" date="1993" name="J. Mol. Biol.">
        <title>Sweet-tasting protein monellin is related to the cystatin family of thiol proteinase inhibitors.</title>
        <authorList>
            <person name="Murzin A.G."/>
        </authorList>
    </citation>
    <scope>SIMILARITY TO CYSTATINS</scope>
</reference>
<organism>
    <name type="scientific">Dioscoreophyllum cumminsii</name>
    <name type="common">Serendipity berry</name>
    <name type="synonym">Rhopalandria cumminsii</name>
    <dbReference type="NCBI Taxonomy" id="3457"/>
    <lineage>
        <taxon>Eukaryota</taxon>
        <taxon>Viridiplantae</taxon>
        <taxon>Streptophyta</taxon>
        <taxon>Embryophyta</taxon>
        <taxon>Tracheophyta</taxon>
        <taxon>Spermatophyta</taxon>
        <taxon>Magnoliopsida</taxon>
        <taxon>Ranunculales</taxon>
        <taxon>Menispermaceae</taxon>
        <taxon>Chasmantheroideae</taxon>
        <taxon>Burasaieae</taxon>
        <taxon>Dioscoreophyllum</taxon>
    </lineage>
</organism>
<protein>
    <recommendedName>
        <fullName>Monellin chain A</fullName>
    </recommendedName>
    <alternativeName>
        <fullName>Monellin chain I</fullName>
    </alternativeName>
</protein>
<keyword id="KW-0002">3D-structure</keyword>
<keyword id="KW-0903">Direct protein sequencing</keyword>
<keyword id="KW-0776">Taste-modifying protein</keyword>
<comment type="function">
    <text>Taste-modifying protein; intensely sweet-tasting protein.</text>
</comment>
<comment type="subunit">
    <text>Heterodimer of an A chain and a B chain.</text>
</comment>
<comment type="biotechnology">
    <text>Natural monellin has not been mass marketed to the food industry, primarily due to the challenge of large-scale purification of the protein which is relatively sensitive to heat or acid treatment.</text>
</comment>